<feature type="chain" id="PRO_0000301085" description="Peptide deformylase">
    <location>
        <begin position="1"/>
        <end position="184"/>
    </location>
</feature>
<feature type="active site" evidence="1">
    <location>
        <position position="135"/>
    </location>
</feature>
<feature type="binding site" evidence="1">
    <location>
        <position position="92"/>
    </location>
    <ligand>
        <name>Fe cation</name>
        <dbReference type="ChEBI" id="CHEBI:24875"/>
    </ligand>
</feature>
<feature type="binding site" evidence="1">
    <location>
        <position position="134"/>
    </location>
    <ligand>
        <name>Fe cation</name>
        <dbReference type="ChEBI" id="CHEBI:24875"/>
    </ligand>
</feature>
<feature type="binding site" evidence="1">
    <location>
        <position position="138"/>
    </location>
    <ligand>
        <name>Fe cation</name>
        <dbReference type="ChEBI" id="CHEBI:24875"/>
    </ligand>
</feature>
<protein>
    <recommendedName>
        <fullName evidence="1">Peptide deformylase</fullName>
        <shortName evidence="1">PDF</shortName>
        <ecNumber evidence="1">3.5.1.88</ecNumber>
    </recommendedName>
    <alternativeName>
        <fullName evidence="1">Polypeptide deformylase</fullName>
    </alternativeName>
</protein>
<comment type="function">
    <text evidence="1">Removes the formyl group from the N-terminal Met of newly synthesized proteins. Requires at least a dipeptide for an efficient rate of reaction. N-terminal L-methionine is a prerequisite for activity but the enzyme has broad specificity at other positions.</text>
</comment>
<comment type="catalytic activity">
    <reaction evidence="1">
        <text>N-terminal N-formyl-L-methionyl-[peptide] + H2O = N-terminal L-methionyl-[peptide] + formate</text>
        <dbReference type="Rhea" id="RHEA:24420"/>
        <dbReference type="Rhea" id="RHEA-COMP:10639"/>
        <dbReference type="Rhea" id="RHEA-COMP:10640"/>
        <dbReference type="ChEBI" id="CHEBI:15377"/>
        <dbReference type="ChEBI" id="CHEBI:15740"/>
        <dbReference type="ChEBI" id="CHEBI:49298"/>
        <dbReference type="ChEBI" id="CHEBI:64731"/>
        <dbReference type="EC" id="3.5.1.88"/>
    </reaction>
</comment>
<comment type="cofactor">
    <cofactor evidence="1">
        <name>Fe(2+)</name>
        <dbReference type="ChEBI" id="CHEBI:29033"/>
    </cofactor>
    <text evidence="1">Binds 1 Fe(2+) ion.</text>
</comment>
<comment type="similarity">
    <text evidence="1">Belongs to the polypeptide deformylase family.</text>
</comment>
<reference key="1">
    <citation type="submission" date="2006-03" db="EMBL/GenBank/DDBJ databases">
        <title>Complete sequence of chromosome of Psychrobacter cryohalolentis K5.</title>
        <authorList>
            <consortium name="US DOE Joint Genome Institute"/>
            <person name="Copeland A."/>
            <person name="Lucas S."/>
            <person name="Lapidus A."/>
            <person name="Barry K."/>
            <person name="Detter J.C."/>
            <person name="Glavina T."/>
            <person name="Hammon N."/>
            <person name="Israni S."/>
            <person name="Dalin E."/>
            <person name="Tice H."/>
            <person name="Pitluck S."/>
            <person name="Brettin T."/>
            <person name="Bruce D."/>
            <person name="Han C."/>
            <person name="Tapia R."/>
            <person name="Sims D.R."/>
            <person name="Gilna P."/>
            <person name="Schmutz J."/>
            <person name="Larimer F."/>
            <person name="Land M."/>
            <person name="Hauser L."/>
            <person name="Kyrpides N."/>
            <person name="Kim E."/>
            <person name="Richardson P."/>
        </authorList>
    </citation>
    <scope>NUCLEOTIDE SEQUENCE [LARGE SCALE GENOMIC DNA]</scope>
    <source>
        <strain>ATCC BAA-1226 / DSM 17306 / VKM B-2378 / K5</strain>
    </source>
</reference>
<gene>
    <name evidence="1" type="primary">def</name>
    <name type="ordered locus">Pcryo_0038</name>
</gene>
<proteinExistence type="inferred from homology"/>
<dbReference type="EC" id="3.5.1.88" evidence="1"/>
<dbReference type="EMBL" id="CP000323">
    <property type="protein sequence ID" value="ABE73822.1"/>
    <property type="molecule type" value="Genomic_DNA"/>
</dbReference>
<dbReference type="RefSeq" id="WP_011512414.1">
    <property type="nucleotide sequence ID" value="NC_007969.1"/>
</dbReference>
<dbReference type="SMR" id="Q1QET1"/>
<dbReference type="STRING" id="335284.Pcryo_0038"/>
<dbReference type="KEGG" id="pcr:Pcryo_0038"/>
<dbReference type="eggNOG" id="COG0242">
    <property type="taxonomic scope" value="Bacteria"/>
</dbReference>
<dbReference type="HOGENOM" id="CLU_061901_2_0_6"/>
<dbReference type="Proteomes" id="UP000002425">
    <property type="component" value="Chromosome"/>
</dbReference>
<dbReference type="GO" id="GO:0046872">
    <property type="term" value="F:metal ion binding"/>
    <property type="evidence" value="ECO:0007669"/>
    <property type="project" value="UniProtKB-KW"/>
</dbReference>
<dbReference type="GO" id="GO:0042586">
    <property type="term" value="F:peptide deformylase activity"/>
    <property type="evidence" value="ECO:0007669"/>
    <property type="project" value="UniProtKB-UniRule"/>
</dbReference>
<dbReference type="GO" id="GO:0043686">
    <property type="term" value="P:co-translational protein modification"/>
    <property type="evidence" value="ECO:0007669"/>
    <property type="project" value="TreeGrafter"/>
</dbReference>
<dbReference type="GO" id="GO:0006412">
    <property type="term" value="P:translation"/>
    <property type="evidence" value="ECO:0007669"/>
    <property type="project" value="UniProtKB-UniRule"/>
</dbReference>
<dbReference type="CDD" id="cd00487">
    <property type="entry name" value="Pep_deformylase"/>
    <property type="match status" value="1"/>
</dbReference>
<dbReference type="FunFam" id="3.90.45.10:FF:000001">
    <property type="entry name" value="Peptide deformylase"/>
    <property type="match status" value="1"/>
</dbReference>
<dbReference type="Gene3D" id="3.90.45.10">
    <property type="entry name" value="Peptide deformylase"/>
    <property type="match status" value="1"/>
</dbReference>
<dbReference type="HAMAP" id="MF_00163">
    <property type="entry name" value="Pep_deformylase"/>
    <property type="match status" value="1"/>
</dbReference>
<dbReference type="InterPro" id="IPR023635">
    <property type="entry name" value="Peptide_deformylase"/>
</dbReference>
<dbReference type="InterPro" id="IPR036821">
    <property type="entry name" value="Peptide_deformylase_sf"/>
</dbReference>
<dbReference type="NCBIfam" id="TIGR00079">
    <property type="entry name" value="pept_deformyl"/>
    <property type="match status" value="1"/>
</dbReference>
<dbReference type="NCBIfam" id="NF001159">
    <property type="entry name" value="PRK00150.1-3"/>
    <property type="match status" value="1"/>
</dbReference>
<dbReference type="PANTHER" id="PTHR10458">
    <property type="entry name" value="PEPTIDE DEFORMYLASE"/>
    <property type="match status" value="1"/>
</dbReference>
<dbReference type="PANTHER" id="PTHR10458:SF22">
    <property type="entry name" value="PEPTIDE DEFORMYLASE"/>
    <property type="match status" value="1"/>
</dbReference>
<dbReference type="Pfam" id="PF01327">
    <property type="entry name" value="Pep_deformylase"/>
    <property type="match status" value="1"/>
</dbReference>
<dbReference type="PIRSF" id="PIRSF004749">
    <property type="entry name" value="Pep_def"/>
    <property type="match status" value="1"/>
</dbReference>
<dbReference type="PRINTS" id="PR01576">
    <property type="entry name" value="PDEFORMYLASE"/>
</dbReference>
<dbReference type="SUPFAM" id="SSF56420">
    <property type="entry name" value="Peptide deformylase"/>
    <property type="match status" value="1"/>
</dbReference>
<sequence length="184" mass="20855">MALLPILSYPDPRLRTIATPVKEVTAEIKTLITDMIETMYDAQGIGLAASQVDHHIQLIVMDLSEDKDSPRVFINPKVTPLVEEKQPYEEGCLSVPDVYDKVERPNKVRIEALDENGNKIDEEVEGLLAVCIQHEMDHLNGVIFVDYLSRLKQTRARDKVRKVLKIREKQGEQVAEKEPQPANS</sequence>
<organism>
    <name type="scientific">Psychrobacter cryohalolentis (strain ATCC BAA-1226 / DSM 17306 / VKM B-2378 / K5)</name>
    <dbReference type="NCBI Taxonomy" id="335284"/>
    <lineage>
        <taxon>Bacteria</taxon>
        <taxon>Pseudomonadati</taxon>
        <taxon>Pseudomonadota</taxon>
        <taxon>Gammaproteobacteria</taxon>
        <taxon>Moraxellales</taxon>
        <taxon>Moraxellaceae</taxon>
        <taxon>Psychrobacter</taxon>
    </lineage>
</organism>
<name>DEF_PSYCK</name>
<accession>Q1QET1</accession>
<evidence type="ECO:0000255" key="1">
    <source>
        <dbReference type="HAMAP-Rule" id="MF_00163"/>
    </source>
</evidence>
<keyword id="KW-0378">Hydrolase</keyword>
<keyword id="KW-0408">Iron</keyword>
<keyword id="KW-0479">Metal-binding</keyword>
<keyword id="KW-0648">Protein biosynthesis</keyword>